<gene>
    <name evidence="1" type="primary">tyrS</name>
    <name type="ordered locus">Dole_0609</name>
</gene>
<proteinExistence type="inferred from homology"/>
<comment type="function">
    <text evidence="1">Catalyzes the attachment of tyrosine to tRNA(Tyr) in a two-step reaction: tyrosine is first activated by ATP to form Tyr-AMP and then transferred to the acceptor end of tRNA(Tyr).</text>
</comment>
<comment type="catalytic activity">
    <reaction evidence="1">
        <text>tRNA(Tyr) + L-tyrosine + ATP = L-tyrosyl-tRNA(Tyr) + AMP + diphosphate + H(+)</text>
        <dbReference type="Rhea" id="RHEA:10220"/>
        <dbReference type="Rhea" id="RHEA-COMP:9706"/>
        <dbReference type="Rhea" id="RHEA-COMP:9707"/>
        <dbReference type="ChEBI" id="CHEBI:15378"/>
        <dbReference type="ChEBI" id="CHEBI:30616"/>
        <dbReference type="ChEBI" id="CHEBI:33019"/>
        <dbReference type="ChEBI" id="CHEBI:58315"/>
        <dbReference type="ChEBI" id="CHEBI:78442"/>
        <dbReference type="ChEBI" id="CHEBI:78536"/>
        <dbReference type="ChEBI" id="CHEBI:456215"/>
        <dbReference type="EC" id="6.1.1.1"/>
    </reaction>
</comment>
<comment type="subunit">
    <text evidence="1">Homodimer.</text>
</comment>
<comment type="subcellular location">
    <subcellularLocation>
        <location evidence="1">Cytoplasm</location>
    </subcellularLocation>
</comment>
<comment type="similarity">
    <text evidence="1">Belongs to the class-I aminoacyl-tRNA synthetase family. TyrS type 1 subfamily.</text>
</comment>
<evidence type="ECO:0000255" key="1">
    <source>
        <dbReference type="HAMAP-Rule" id="MF_02006"/>
    </source>
</evidence>
<protein>
    <recommendedName>
        <fullName evidence="1">Tyrosine--tRNA ligase</fullName>
        <ecNumber evidence="1">6.1.1.1</ecNumber>
    </recommendedName>
    <alternativeName>
        <fullName evidence="1">Tyrosyl-tRNA synthetase</fullName>
        <shortName evidence="1">TyrRS</shortName>
    </alternativeName>
</protein>
<sequence length="433" mass="47603">MSVVDILSERGFVEAFTHEQELRDLAAESAVTCYIGFDPTASSLHVGSLVPIMALAHMQRNGHRPIALVGGGTGLVGDPSGKTEMRQLITPETVEANIEGIQRQLSRFIDFDGGKALLVNNADWLTGLEYIPFLRDIGRHFSVNRMIKAESYRMRLESEEGLSFIEFNYMLLQAYDFLKLCGDRDCVLQMGGSDQWGNIVAGIDLVRRVLNRQVYGLTFPLITTSSGAKMGKTAAGAVWLDAERTSPYDYYQYWINTDDQDVARFLSLFTFLPMPEIQEVKRISGADLNSAKAVLAFEATRIAHGTDAAVQAHSDAAVNFGRRDIPQDLLPSSTIPRDAEGTGAAVSGTAPQTEMTMAELSEGIPAFVLFHTVGLADSKGQARRLIQQGGGYVNDRRIESDEYRVSAEDLDDAKIVLRAGKKRYHTIVVRKGA</sequence>
<keyword id="KW-0030">Aminoacyl-tRNA synthetase</keyword>
<keyword id="KW-0067">ATP-binding</keyword>
<keyword id="KW-0963">Cytoplasm</keyword>
<keyword id="KW-0436">Ligase</keyword>
<keyword id="KW-0547">Nucleotide-binding</keyword>
<keyword id="KW-0648">Protein biosynthesis</keyword>
<keyword id="KW-1185">Reference proteome</keyword>
<keyword id="KW-0694">RNA-binding</keyword>
<organism>
    <name type="scientific">Desulfosudis oleivorans (strain DSM 6200 / JCM 39069 / Hxd3)</name>
    <name type="common">Desulfococcus oleovorans</name>
    <dbReference type="NCBI Taxonomy" id="96561"/>
    <lineage>
        <taxon>Bacteria</taxon>
        <taxon>Pseudomonadati</taxon>
        <taxon>Thermodesulfobacteriota</taxon>
        <taxon>Desulfobacteria</taxon>
        <taxon>Desulfobacterales</taxon>
        <taxon>Desulfosudaceae</taxon>
        <taxon>Desulfosudis</taxon>
    </lineage>
</organism>
<name>SYY_DESOH</name>
<reference key="1">
    <citation type="submission" date="2007-10" db="EMBL/GenBank/DDBJ databases">
        <title>Complete sequence of Desulfococcus oleovorans Hxd3.</title>
        <authorList>
            <consortium name="US DOE Joint Genome Institute"/>
            <person name="Copeland A."/>
            <person name="Lucas S."/>
            <person name="Lapidus A."/>
            <person name="Barry K."/>
            <person name="Glavina del Rio T."/>
            <person name="Dalin E."/>
            <person name="Tice H."/>
            <person name="Pitluck S."/>
            <person name="Kiss H."/>
            <person name="Brettin T."/>
            <person name="Bruce D."/>
            <person name="Detter J.C."/>
            <person name="Han C."/>
            <person name="Schmutz J."/>
            <person name="Larimer F."/>
            <person name="Land M."/>
            <person name="Hauser L."/>
            <person name="Kyrpides N."/>
            <person name="Kim E."/>
            <person name="Wawrik B."/>
            <person name="Richardson P."/>
        </authorList>
    </citation>
    <scope>NUCLEOTIDE SEQUENCE [LARGE SCALE GENOMIC DNA]</scope>
    <source>
        <strain>DSM 6200 / JCM 39069 / Hxd3</strain>
    </source>
</reference>
<accession>A8ZUK6</accession>
<dbReference type="EC" id="6.1.1.1" evidence="1"/>
<dbReference type="EMBL" id="CP000859">
    <property type="protein sequence ID" value="ABW66419.1"/>
    <property type="molecule type" value="Genomic_DNA"/>
</dbReference>
<dbReference type="RefSeq" id="WP_012174038.1">
    <property type="nucleotide sequence ID" value="NC_009943.1"/>
</dbReference>
<dbReference type="SMR" id="A8ZUK6"/>
<dbReference type="STRING" id="96561.Dole_0609"/>
<dbReference type="KEGG" id="dol:Dole_0609"/>
<dbReference type="eggNOG" id="COG0162">
    <property type="taxonomic scope" value="Bacteria"/>
</dbReference>
<dbReference type="HOGENOM" id="CLU_024003_0_3_7"/>
<dbReference type="OrthoDB" id="9804243at2"/>
<dbReference type="Proteomes" id="UP000008561">
    <property type="component" value="Chromosome"/>
</dbReference>
<dbReference type="GO" id="GO:0005829">
    <property type="term" value="C:cytosol"/>
    <property type="evidence" value="ECO:0007669"/>
    <property type="project" value="TreeGrafter"/>
</dbReference>
<dbReference type="GO" id="GO:0005524">
    <property type="term" value="F:ATP binding"/>
    <property type="evidence" value="ECO:0007669"/>
    <property type="project" value="UniProtKB-UniRule"/>
</dbReference>
<dbReference type="GO" id="GO:0003723">
    <property type="term" value="F:RNA binding"/>
    <property type="evidence" value="ECO:0007669"/>
    <property type="project" value="UniProtKB-KW"/>
</dbReference>
<dbReference type="GO" id="GO:0004831">
    <property type="term" value="F:tyrosine-tRNA ligase activity"/>
    <property type="evidence" value="ECO:0007669"/>
    <property type="project" value="UniProtKB-UniRule"/>
</dbReference>
<dbReference type="GO" id="GO:0006437">
    <property type="term" value="P:tyrosyl-tRNA aminoacylation"/>
    <property type="evidence" value="ECO:0007669"/>
    <property type="project" value="UniProtKB-UniRule"/>
</dbReference>
<dbReference type="CDD" id="cd00165">
    <property type="entry name" value="S4"/>
    <property type="match status" value="1"/>
</dbReference>
<dbReference type="CDD" id="cd00805">
    <property type="entry name" value="TyrRS_core"/>
    <property type="match status" value="1"/>
</dbReference>
<dbReference type="FunFam" id="1.10.240.10:FF:000001">
    <property type="entry name" value="Tyrosine--tRNA ligase"/>
    <property type="match status" value="1"/>
</dbReference>
<dbReference type="FunFam" id="3.40.50.620:FF:000008">
    <property type="entry name" value="Tyrosine--tRNA ligase"/>
    <property type="match status" value="1"/>
</dbReference>
<dbReference type="Gene3D" id="3.40.50.620">
    <property type="entry name" value="HUPs"/>
    <property type="match status" value="1"/>
</dbReference>
<dbReference type="Gene3D" id="3.10.290.10">
    <property type="entry name" value="RNA-binding S4 domain"/>
    <property type="match status" value="1"/>
</dbReference>
<dbReference type="Gene3D" id="1.10.240.10">
    <property type="entry name" value="Tyrosyl-Transfer RNA Synthetase"/>
    <property type="match status" value="1"/>
</dbReference>
<dbReference type="HAMAP" id="MF_02006">
    <property type="entry name" value="Tyr_tRNA_synth_type1"/>
    <property type="match status" value="1"/>
</dbReference>
<dbReference type="InterPro" id="IPR002305">
    <property type="entry name" value="aa-tRNA-synth_Ic"/>
</dbReference>
<dbReference type="InterPro" id="IPR014729">
    <property type="entry name" value="Rossmann-like_a/b/a_fold"/>
</dbReference>
<dbReference type="InterPro" id="IPR036986">
    <property type="entry name" value="S4_RNA-bd_sf"/>
</dbReference>
<dbReference type="InterPro" id="IPR054608">
    <property type="entry name" value="SYY-like_C"/>
</dbReference>
<dbReference type="InterPro" id="IPR002307">
    <property type="entry name" value="Tyr-tRNA-ligase"/>
</dbReference>
<dbReference type="InterPro" id="IPR024088">
    <property type="entry name" value="Tyr-tRNA-ligase_bac-type"/>
</dbReference>
<dbReference type="InterPro" id="IPR024107">
    <property type="entry name" value="Tyr-tRNA-ligase_bac_1"/>
</dbReference>
<dbReference type="NCBIfam" id="TIGR00234">
    <property type="entry name" value="tyrS"/>
    <property type="match status" value="1"/>
</dbReference>
<dbReference type="PANTHER" id="PTHR11766:SF0">
    <property type="entry name" value="TYROSINE--TRNA LIGASE, MITOCHONDRIAL"/>
    <property type="match status" value="1"/>
</dbReference>
<dbReference type="PANTHER" id="PTHR11766">
    <property type="entry name" value="TYROSYL-TRNA SYNTHETASE"/>
    <property type="match status" value="1"/>
</dbReference>
<dbReference type="Pfam" id="PF22421">
    <property type="entry name" value="SYY_C-terminal"/>
    <property type="match status" value="1"/>
</dbReference>
<dbReference type="Pfam" id="PF00579">
    <property type="entry name" value="tRNA-synt_1b"/>
    <property type="match status" value="1"/>
</dbReference>
<dbReference type="PRINTS" id="PR01040">
    <property type="entry name" value="TRNASYNTHTYR"/>
</dbReference>
<dbReference type="SUPFAM" id="SSF55174">
    <property type="entry name" value="Alpha-L RNA-binding motif"/>
    <property type="match status" value="1"/>
</dbReference>
<dbReference type="SUPFAM" id="SSF52374">
    <property type="entry name" value="Nucleotidylyl transferase"/>
    <property type="match status" value="1"/>
</dbReference>
<dbReference type="PROSITE" id="PS50889">
    <property type="entry name" value="S4"/>
    <property type="match status" value="1"/>
</dbReference>
<feature type="chain" id="PRO_1000189286" description="Tyrosine--tRNA ligase">
    <location>
        <begin position="1"/>
        <end position="433"/>
    </location>
</feature>
<feature type="domain" description="S4 RNA-binding" evidence="1">
    <location>
        <begin position="364"/>
        <end position="432"/>
    </location>
</feature>
<feature type="short sequence motif" description="'HIGH' region">
    <location>
        <begin position="39"/>
        <end position="48"/>
    </location>
</feature>
<feature type="short sequence motif" description="'KMSKS' region">
    <location>
        <begin position="229"/>
        <end position="233"/>
    </location>
</feature>
<feature type="binding site" evidence="1">
    <location>
        <position position="34"/>
    </location>
    <ligand>
        <name>L-tyrosine</name>
        <dbReference type="ChEBI" id="CHEBI:58315"/>
    </ligand>
</feature>
<feature type="binding site" evidence="1">
    <location>
        <position position="169"/>
    </location>
    <ligand>
        <name>L-tyrosine</name>
        <dbReference type="ChEBI" id="CHEBI:58315"/>
    </ligand>
</feature>
<feature type="binding site" evidence="1">
    <location>
        <position position="173"/>
    </location>
    <ligand>
        <name>L-tyrosine</name>
        <dbReference type="ChEBI" id="CHEBI:58315"/>
    </ligand>
</feature>
<feature type="binding site" evidence="1">
    <location>
        <position position="232"/>
    </location>
    <ligand>
        <name>ATP</name>
        <dbReference type="ChEBI" id="CHEBI:30616"/>
    </ligand>
</feature>